<keyword id="KW-0687">Ribonucleoprotein</keyword>
<keyword id="KW-0689">Ribosomal protein</keyword>
<reference key="1">
    <citation type="journal article" date="2005" name="PLoS Biol.">
        <title>The genome sequence of Rickettsia felis identifies the first putative conjugative plasmid in an obligate intracellular parasite.</title>
        <authorList>
            <person name="Ogata H."/>
            <person name="Renesto P."/>
            <person name="Audic S."/>
            <person name="Robert C."/>
            <person name="Blanc G."/>
            <person name="Fournier P.-E."/>
            <person name="Parinello H."/>
            <person name="Claverie J.-M."/>
            <person name="Raoult D."/>
        </authorList>
    </citation>
    <scope>NUCLEOTIDE SEQUENCE [LARGE SCALE GENOMIC DNA]</scope>
    <source>
        <strain>ATCC VR-1525 / URRWXCal2</strain>
    </source>
</reference>
<sequence length="41" mass="4833">MKVVSSLKSLKKRDKDCQIVKRRGKIFVINKKNKRFKAKQG</sequence>
<evidence type="ECO:0000255" key="1">
    <source>
        <dbReference type="HAMAP-Rule" id="MF_00251"/>
    </source>
</evidence>
<evidence type="ECO:0000305" key="2"/>
<feature type="chain" id="PRO_0000278026" description="Large ribosomal subunit protein bL36">
    <location>
        <begin position="1"/>
        <end position="41"/>
    </location>
</feature>
<name>RL36_RICFE</name>
<gene>
    <name evidence="1" type="primary">rpmJ</name>
    <name type="ordered locus">RF_0800</name>
</gene>
<dbReference type="EMBL" id="CP000053">
    <property type="protein sequence ID" value="AAY61651.1"/>
    <property type="molecule type" value="Genomic_DNA"/>
</dbReference>
<dbReference type="SMR" id="Q4ULC2"/>
<dbReference type="STRING" id="315456.RF_0800"/>
<dbReference type="KEGG" id="rfe:RF_0800"/>
<dbReference type="eggNOG" id="COG0257">
    <property type="taxonomic scope" value="Bacteria"/>
</dbReference>
<dbReference type="HOGENOM" id="CLU_135723_3_2_5"/>
<dbReference type="Proteomes" id="UP000008548">
    <property type="component" value="Chromosome"/>
</dbReference>
<dbReference type="GO" id="GO:1990904">
    <property type="term" value="C:ribonucleoprotein complex"/>
    <property type="evidence" value="ECO:0007669"/>
    <property type="project" value="UniProtKB-KW"/>
</dbReference>
<dbReference type="GO" id="GO:0005840">
    <property type="term" value="C:ribosome"/>
    <property type="evidence" value="ECO:0007669"/>
    <property type="project" value="UniProtKB-KW"/>
</dbReference>
<dbReference type="GO" id="GO:0003735">
    <property type="term" value="F:structural constituent of ribosome"/>
    <property type="evidence" value="ECO:0007669"/>
    <property type="project" value="InterPro"/>
</dbReference>
<dbReference type="GO" id="GO:0006412">
    <property type="term" value="P:translation"/>
    <property type="evidence" value="ECO:0007669"/>
    <property type="project" value="UniProtKB-UniRule"/>
</dbReference>
<dbReference type="HAMAP" id="MF_00251">
    <property type="entry name" value="Ribosomal_bL36"/>
    <property type="match status" value="1"/>
</dbReference>
<dbReference type="InterPro" id="IPR000473">
    <property type="entry name" value="Ribosomal_bL36"/>
</dbReference>
<dbReference type="InterPro" id="IPR035977">
    <property type="entry name" value="Ribosomal_bL36_sp"/>
</dbReference>
<dbReference type="InterPro" id="IPR047621">
    <property type="entry name" value="Ribosomal_L36_bact"/>
</dbReference>
<dbReference type="NCBIfam" id="NF002021">
    <property type="entry name" value="PRK00831.1"/>
    <property type="match status" value="1"/>
</dbReference>
<dbReference type="PANTHER" id="PTHR47781">
    <property type="entry name" value="50S RIBOSOMAL PROTEIN L36 2"/>
    <property type="match status" value="1"/>
</dbReference>
<dbReference type="PANTHER" id="PTHR47781:SF1">
    <property type="entry name" value="LARGE RIBOSOMAL SUBUNIT PROTEIN BL36B"/>
    <property type="match status" value="1"/>
</dbReference>
<dbReference type="Pfam" id="PF00444">
    <property type="entry name" value="Ribosomal_L36"/>
    <property type="match status" value="1"/>
</dbReference>
<dbReference type="SUPFAM" id="SSF57840">
    <property type="entry name" value="Ribosomal protein L36"/>
    <property type="match status" value="1"/>
</dbReference>
<dbReference type="PROSITE" id="PS00828">
    <property type="entry name" value="RIBOSOMAL_L36"/>
    <property type="match status" value="1"/>
</dbReference>
<protein>
    <recommendedName>
        <fullName evidence="1">Large ribosomal subunit protein bL36</fullName>
    </recommendedName>
    <alternativeName>
        <fullName evidence="2">50S ribosomal protein L36</fullName>
    </alternativeName>
</protein>
<proteinExistence type="inferred from homology"/>
<organism>
    <name type="scientific">Rickettsia felis (strain ATCC VR-1525 / URRWXCal2)</name>
    <name type="common">Rickettsia azadi</name>
    <dbReference type="NCBI Taxonomy" id="315456"/>
    <lineage>
        <taxon>Bacteria</taxon>
        <taxon>Pseudomonadati</taxon>
        <taxon>Pseudomonadota</taxon>
        <taxon>Alphaproteobacteria</taxon>
        <taxon>Rickettsiales</taxon>
        <taxon>Rickettsiaceae</taxon>
        <taxon>Rickettsieae</taxon>
        <taxon>Rickettsia</taxon>
        <taxon>spotted fever group</taxon>
    </lineage>
</organism>
<accession>Q4ULC2</accession>
<comment type="similarity">
    <text evidence="1">Belongs to the bacterial ribosomal protein bL36 family.</text>
</comment>